<organism>
    <name type="scientific">Methanosarcina acetivorans (strain ATCC 35395 / DSM 2834 / JCM 12185 / C2A)</name>
    <dbReference type="NCBI Taxonomy" id="188937"/>
    <lineage>
        <taxon>Archaea</taxon>
        <taxon>Methanobacteriati</taxon>
        <taxon>Methanobacteriota</taxon>
        <taxon>Stenosarchaea group</taxon>
        <taxon>Methanomicrobia</taxon>
        <taxon>Methanosarcinales</taxon>
        <taxon>Methanosarcinaceae</taxon>
        <taxon>Methanosarcina</taxon>
    </lineage>
</organism>
<name>DHYS2_METAC</name>
<reference key="1">
    <citation type="journal article" date="2002" name="Genome Res.">
        <title>The genome of Methanosarcina acetivorans reveals extensive metabolic and physiological diversity.</title>
        <authorList>
            <person name="Galagan J.E."/>
            <person name="Nusbaum C."/>
            <person name="Roy A."/>
            <person name="Endrizzi M.G."/>
            <person name="Macdonald P."/>
            <person name="FitzHugh W."/>
            <person name="Calvo S."/>
            <person name="Engels R."/>
            <person name="Smirnov S."/>
            <person name="Atnoor D."/>
            <person name="Brown A."/>
            <person name="Allen N."/>
            <person name="Naylor J."/>
            <person name="Stange-Thomann N."/>
            <person name="DeArellano K."/>
            <person name="Johnson R."/>
            <person name="Linton L."/>
            <person name="McEwan P."/>
            <person name="McKernan K."/>
            <person name="Talamas J."/>
            <person name="Tirrell A."/>
            <person name="Ye W."/>
            <person name="Zimmer A."/>
            <person name="Barber R.D."/>
            <person name="Cann I."/>
            <person name="Graham D.E."/>
            <person name="Grahame D.A."/>
            <person name="Guss A.M."/>
            <person name="Hedderich R."/>
            <person name="Ingram-Smith C."/>
            <person name="Kuettner H.C."/>
            <person name="Krzycki J.A."/>
            <person name="Leigh J.A."/>
            <person name="Li W."/>
            <person name="Liu J."/>
            <person name="Mukhopadhyay B."/>
            <person name="Reeve J.N."/>
            <person name="Smith K."/>
            <person name="Springer T.A."/>
            <person name="Umayam L.A."/>
            <person name="White O."/>
            <person name="White R.H."/>
            <person name="de Macario E.C."/>
            <person name="Ferry J.G."/>
            <person name="Jarrell K.F."/>
            <person name="Jing H."/>
            <person name="Macario A.J.L."/>
            <person name="Paulsen I.T."/>
            <person name="Pritchett M."/>
            <person name="Sowers K.R."/>
            <person name="Swanson R.V."/>
            <person name="Zinder S.H."/>
            <person name="Lander E."/>
            <person name="Metcalf W.W."/>
            <person name="Birren B."/>
        </authorList>
    </citation>
    <scope>NUCLEOTIDE SEQUENCE [LARGE SCALE GENOMIC DNA]</scope>
    <source>
        <strain>ATCC 35395 / DSM 2834 / JCM 12185 / C2A</strain>
    </source>
</reference>
<dbReference type="EC" id="2.5.1.46"/>
<dbReference type="EMBL" id="AE010299">
    <property type="protein sequence ID" value="AAM06386.1"/>
    <property type="molecule type" value="Genomic_DNA"/>
</dbReference>
<dbReference type="RefSeq" id="WP_011022952.1">
    <property type="nucleotide sequence ID" value="NC_003552.1"/>
</dbReference>
<dbReference type="SMR" id="Q8TLM3"/>
<dbReference type="FunCoup" id="Q8TLM3">
    <property type="interactions" value="179"/>
</dbReference>
<dbReference type="STRING" id="188937.MA_3013"/>
<dbReference type="EnsemblBacteria" id="AAM06386">
    <property type="protein sequence ID" value="AAM06386"/>
    <property type="gene ID" value="MA_3013"/>
</dbReference>
<dbReference type="GeneID" id="1474907"/>
<dbReference type="KEGG" id="mac:MA_3013"/>
<dbReference type="HOGENOM" id="CLU_039781_1_0_2"/>
<dbReference type="InParanoid" id="Q8TLM3"/>
<dbReference type="OrthoDB" id="17730at2157"/>
<dbReference type="PhylomeDB" id="Q8TLM3"/>
<dbReference type="UniPathway" id="UPA00354"/>
<dbReference type="Proteomes" id="UP000002487">
    <property type="component" value="Chromosome"/>
</dbReference>
<dbReference type="GO" id="GO:0005737">
    <property type="term" value="C:cytoplasm"/>
    <property type="evidence" value="ECO:0000318"/>
    <property type="project" value="GO_Central"/>
</dbReference>
<dbReference type="GO" id="GO:0034038">
    <property type="term" value="F:deoxyhypusine synthase activity"/>
    <property type="evidence" value="ECO:0000318"/>
    <property type="project" value="GO_Central"/>
</dbReference>
<dbReference type="GO" id="GO:0008216">
    <property type="term" value="P:spermidine metabolic process"/>
    <property type="evidence" value="ECO:0000318"/>
    <property type="project" value="GO_Central"/>
</dbReference>
<dbReference type="FunFam" id="3.40.910.10:FF:000006">
    <property type="entry name" value="Probable deoxyhypusine synthase"/>
    <property type="match status" value="1"/>
</dbReference>
<dbReference type="Gene3D" id="3.40.910.10">
    <property type="entry name" value="Deoxyhypusine synthase"/>
    <property type="match status" value="1"/>
</dbReference>
<dbReference type="HAMAP" id="MF_00153">
    <property type="entry name" value="DHS"/>
    <property type="match status" value="1"/>
</dbReference>
<dbReference type="InterPro" id="IPR022899">
    <property type="entry name" value="Deoxyhypus_synthase_arc"/>
</dbReference>
<dbReference type="InterPro" id="IPR002773">
    <property type="entry name" value="Deoxyhypusine_synthase"/>
</dbReference>
<dbReference type="InterPro" id="IPR036982">
    <property type="entry name" value="Deoxyhypusine_synthase_sf"/>
</dbReference>
<dbReference type="InterPro" id="IPR029035">
    <property type="entry name" value="DHS-like_NAD/FAD-binding_dom"/>
</dbReference>
<dbReference type="NCBIfam" id="TIGR00321">
    <property type="entry name" value="dhys"/>
    <property type="match status" value="1"/>
</dbReference>
<dbReference type="NCBIfam" id="NF002006">
    <property type="entry name" value="PRK00805.1"/>
    <property type="match status" value="1"/>
</dbReference>
<dbReference type="PANTHER" id="PTHR11703">
    <property type="entry name" value="DEOXYHYPUSINE SYNTHASE"/>
    <property type="match status" value="1"/>
</dbReference>
<dbReference type="PANTHER" id="PTHR11703:SF2">
    <property type="entry name" value="DEOXYHYPUSINE SYNTHASE-LIKE PROTEIN"/>
    <property type="match status" value="1"/>
</dbReference>
<dbReference type="Pfam" id="PF01916">
    <property type="entry name" value="DS"/>
    <property type="match status" value="1"/>
</dbReference>
<dbReference type="SUPFAM" id="SSF52467">
    <property type="entry name" value="DHS-like NAD/FAD-binding domain"/>
    <property type="match status" value="1"/>
</dbReference>
<proteinExistence type="inferred from homology"/>
<feature type="chain" id="PRO_0000134494" description="Probable deoxyhypusine synthase 2">
    <location>
        <begin position="1"/>
        <end position="345"/>
    </location>
</feature>
<feature type="active site" description="Nucleophile" evidence="1">
    <location>
        <position position="292"/>
    </location>
</feature>
<evidence type="ECO:0000250" key="1"/>
<evidence type="ECO:0000305" key="2"/>
<gene>
    <name type="primary">dys2</name>
    <name type="ordered locus">MA_3013</name>
</gene>
<keyword id="KW-0386">Hypusine biosynthesis</keyword>
<keyword id="KW-0520">NAD</keyword>
<keyword id="KW-1185">Reference proteome</keyword>
<keyword id="KW-0808">Transferase</keyword>
<sequence length="345" mass="38274">MHHNVFTNNPTVPIDVKNRSVSELMDGMLKTGFQGRKLAESVQAWNNMLKEKNTTVFMGLSGAMVPAGMRRIISHMIRERMIDCLVSTGANLFHDCHEALGRKHYVGSHLANDEKLFEQGVDRIYDIFAVEEEFRTADNLIADFAQEIGEITCSSREFMYLLGKELGRRGAAEDSIVVSAYRHNVPIFVPALSDSSIGIGLTIARRRGLKLEIDQIKDVDEITQIVEKSERTGVVYVGGGVPKNFIQQTEVIASILGMDIGGHDYAIQYTSDSPHWGGLSGCTFDEAVSWGKIAPQAKKVQVFVDATIALPIVAHALHEKTHDLKRIAPVFFWDGPEGLAIDYKE</sequence>
<comment type="function">
    <text evidence="1">Catalyzes the NAD-dependent oxidative cleavage of spermidine and the subsequent transfer of the butylamine moiety of spermidine to the epsilon-amino group of a specific lysine residue of the eIF-5A precursor protein to form the intermediate deoxyhypusine residue.</text>
</comment>
<comment type="catalytic activity">
    <reaction>
        <text>[eIF5A protein]-L-lysine + spermidine = [eIF5A protein]-deoxyhypusine + propane-1,3-diamine</text>
        <dbReference type="Rhea" id="RHEA:33299"/>
        <dbReference type="Rhea" id="RHEA-COMP:10143"/>
        <dbReference type="Rhea" id="RHEA-COMP:10144"/>
        <dbReference type="ChEBI" id="CHEBI:29969"/>
        <dbReference type="ChEBI" id="CHEBI:57484"/>
        <dbReference type="ChEBI" id="CHEBI:57834"/>
        <dbReference type="ChEBI" id="CHEBI:82657"/>
        <dbReference type="EC" id="2.5.1.46"/>
    </reaction>
</comment>
<comment type="cofactor">
    <cofactor evidence="1">
        <name>NAD(+)</name>
        <dbReference type="ChEBI" id="CHEBI:57540"/>
    </cofactor>
</comment>
<comment type="pathway">
    <text>Protein modification; eIF5A hypusination.</text>
</comment>
<comment type="similarity">
    <text evidence="2">Belongs to the deoxyhypusine synthase family.</text>
</comment>
<accession>Q8TLM3</accession>
<protein>
    <recommendedName>
        <fullName>Probable deoxyhypusine synthase 2</fullName>
        <shortName>DHS 2</shortName>
        <ecNumber>2.5.1.46</ecNumber>
    </recommendedName>
</protein>